<comment type="function">
    <text evidence="3 4 5 6 7">Odorant coreceptor which complexes with conventional odorant receptors (ORs) to form odorant-sensing units, providing sensitive and prolonged odorant signaling and calcium permeability. Orco is a universal and integral part of the functional odorant receptor, involved in the dendritic localization of other olfactory receptors. Can form functional ion channels in the absence of an odor-binding OR. Plays a key role in preferred attraction of females for humans over non-human hosts for blood feeding. Human attraction plays a crucial role in the transmission of Plasmodium protozoans by the mosquito leading to infection diseases like malaria. Also required for the response to N,N-Diethyl-meta-toluamide (DEET), the most widely used insect repellent worldwide.</text>
</comment>
<comment type="subunit">
    <text>Heterodimer with conventional odorant receptors (ORs). Complexes exist early in the endomembrane system in olfactory sensory neurons (OSNs), coupling these complexes to the conserved ciliary trafficking pathway.</text>
</comment>
<comment type="subcellular location">
    <subcellularLocation>
        <location evidence="1">Cell membrane</location>
        <topology evidence="1">Multi-pass membrane protein</topology>
    </subcellularLocation>
</comment>
<comment type="tissue specificity">
    <text evidence="3">Expressed in olfactory and gustatory organs of both adult and immature stages. Highest expression is seen in adult antennae and the maxillary palps. Lower expression also seen in proboscis and legs. Within the antenna, expression originates in cell bodies and projects into the lumen of an individual sensillum, presumably along the dendritic extension of the neuron. Within the maxillary palps, expression is seen in a small number of cell bodies and in projections into the sensillar cone. Within the probiscus, expression is seen in a single type of sensillum on the outer surface of the labellar lobes.</text>
</comment>
<comment type="developmental stage">
    <text evidence="3">Expressed in preimago stages, including early stage larvae, late-stage larvae, and pupae, but not in embryos.</text>
</comment>
<comment type="miscellaneous">
    <text>The atypical heteromeric and topological design of the odorant receptors appears to be an insect-specific solution for odor recognition, making the OR/Orco complex an attractive target for the development of highly selective insect repellents to disrupt olfactory-mediated host-seeking behaviors of insect disease vectors. Odor-evoked OR currents are independent of known G-protein-coupled second messenger pathways. The homomeric Orco channel is thought to be a cyclic-nucleotide-gated ion channel that depolarizes the olfactory receptor neuron. While many natural and synthetic odorants have been shown to agonize Orco/Or complexes, only a single direct Orco agonist, VUAA1, has been described. On the contrary, amiloride derivatives block Orco/Or complexes.</text>
</comment>
<comment type="similarity">
    <text evidence="8">Belongs to the insect chemoreceptor superfamily. Heteromeric odorant receptor channel (TC 1.A.69) family. Orco subfamily.</text>
</comment>
<comment type="online information" name="Protein Spotlight">
    <link uri="https://www.proteinspotlight.org/back_issues/161/"/>
    <text>The senses confused - Issue 161 of June 2014</text>
</comment>
<accession>Q7QCC7</accession>
<accession>Q6UR07</accession>
<accession>Q6UR08</accession>
<sequence>MQVQPTKYVGLVADLMPNIRLMQASGHFLFRYVTGPILIRKVYSWWTLAMVLIQFFAILGNLATNADDVNELTANTITTLFFTHSVTKFIYFAVNSENFYRTLAIWNQTNTHPLFAESDARYHSIALAKMRKLLVLVMATTVLSVVAWVTITFFGESVKTVLDKATNETYTVDIPRLPIKSWYPWNAMSGPAYIFSFIYQIYFLLFSMVQSNLADVMFCSWLLLACEQLQHLKGIMRSLMELSASLDTYRPNSSQLFRAISAGSKSELIINEEKDPDVKDFDLSGIYSSKADWGAQFRAPSTLQTFDENGRNGNPNGLTRKQEMMVRSAIKYWVERHKHVVRLVSAIGDTYGPALLLHMLTSTIKLTLLAYQATKIDGVNVYGLTVIGYLCYALAQVFLFCIFGNRLIEESSSVMEAAYSCHWYDGSEEAKTFVQIVCQQCQKAMTISGAKFFTVSLDLFASVLGAVVTYFMVLVQLK</sequence>
<gene>
    <name type="primary">Orco</name>
    <name type="synonym">GPRor7</name>
    <name type="ORF">AGAP002560</name>
</gene>
<protein>
    <recommendedName>
        <fullName>Odorant receptor coreceptor</fullName>
    </recommendedName>
    <alternativeName>
        <fullName>AgOr7</fullName>
    </alternativeName>
    <alternativeName>
        <fullName>Gustatory and odorant receptor 7</fullName>
    </alternativeName>
</protein>
<proteinExistence type="evidence at protein level"/>
<reference evidence="8 9" key="1">
    <citation type="journal article" date="2004" name="Proc. Natl. Acad. Sci. U.S.A.">
        <title>A highly conserved candidate chemoreceptor expressed in both olfactory and gustatory tissues in the malaria vector Anopheles gambiae.</title>
        <authorList>
            <person name="Pitts R.J."/>
            <person name="Fox A.N."/>
            <person name="Zwiebel L.J."/>
        </authorList>
    </citation>
    <scope>NUCLEOTIDE SEQUENCE [MRNA]</scope>
    <scope>NUCLEOTIDE SEQUENCE [GENOMIC DNA] OF 148-478</scope>
    <scope>FUNCTION</scope>
    <scope>TISSUE SPECIFICITY</scope>
    <scope>DEVELOPMENTAL STAGE</scope>
    <source>
        <strain evidence="9">G3</strain>
    </source>
</reference>
<reference evidence="10" key="2">
    <citation type="journal article" date="2005" name="Curr. Biol.">
        <title>Functional conservation of an insect odorant receptor gene across 250 million years of evolution.</title>
        <authorList>
            <person name="Jones W.D."/>
            <person name="Nguyen T.-A.T."/>
            <person name="Kloss B."/>
            <person name="Lee K.J."/>
            <person name="Vosshall L.B."/>
        </authorList>
    </citation>
    <scope>NUCLEOTIDE SEQUENCE [MRNA]</scope>
</reference>
<reference evidence="11" key="3">
    <citation type="journal article" date="2002" name="Science">
        <title>The genome sequence of the malaria mosquito Anopheles gambiae.</title>
        <authorList>
            <person name="Holt R.A."/>
            <person name="Subramanian G.M."/>
            <person name="Halpern A."/>
            <person name="Sutton G.G."/>
            <person name="Charlab R."/>
            <person name="Nusskern D.R."/>
            <person name="Wincker P."/>
            <person name="Clark A.G."/>
            <person name="Ribeiro J.M.C."/>
            <person name="Wides R."/>
            <person name="Salzberg S.L."/>
            <person name="Loftus B.J."/>
            <person name="Yandell M.D."/>
            <person name="Majoros W.H."/>
            <person name="Rusch D.B."/>
            <person name="Lai Z."/>
            <person name="Kraft C.L."/>
            <person name="Abril J.F."/>
            <person name="Anthouard V."/>
            <person name="Arensburger P."/>
            <person name="Atkinson P.W."/>
            <person name="Baden H."/>
            <person name="de Berardinis V."/>
            <person name="Baldwin D."/>
            <person name="Benes V."/>
            <person name="Biedler J."/>
            <person name="Blass C."/>
            <person name="Bolanos R."/>
            <person name="Boscus D."/>
            <person name="Barnstead M."/>
            <person name="Cai S."/>
            <person name="Center A."/>
            <person name="Chaturverdi K."/>
            <person name="Christophides G.K."/>
            <person name="Chrystal M.A.M."/>
            <person name="Clamp M."/>
            <person name="Cravchik A."/>
            <person name="Curwen V."/>
            <person name="Dana A."/>
            <person name="Delcher A."/>
            <person name="Dew I."/>
            <person name="Evans C.A."/>
            <person name="Flanigan M."/>
            <person name="Grundschober-Freimoser A."/>
            <person name="Friedli L."/>
            <person name="Gu Z."/>
            <person name="Guan P."/>
            <person name="Guigo R."/>
            <person name="Hillenmeyer M.E."/>
            <person name="Hladun S.L."/>
            <person name="Hogan J.R."/>
            <person name="Hong Y.S."/>
            <person name="Hoover J."/>
            <person name="Jaillon O."/>
            <person name="Ke Z."/>
            <person name="Kodira C.D."/>
            <person name="Kokoza E."/>
            <person name="Koutsos A."/>
            <person name="Letunic I."/>
            <person name="Levitsky A.A."/>
            <person name="Liang Y."/>
            <person name="Lin J.-J."/>
            <person name="Lobo N.F."/>
            <person name="Lopez J.R."/>
            <person name="Malek J.A."/>
            <person name="McIntosh T.C."/>
            <person name="Meister S."/>
            <person name="Miller J.R."/>
            <person name="Mobarry C."/>
            <person name="Mongin E."/>
            <person name="Murphy S.D."/>
            <person name="O'Brochta D.A."/>
            <person name="Pfannkoch C."/>
            <person name="Qi R."/>
            <person name="Regier M.A."/>
            <person name="Remington K."/>
            <person name="Shao H."/>
            <person name="Sharakhova M.V."/>
            <person name="Sitter C.D."/>
            <person name="Shetty J."/>
            <person name="Smith T.J."/>
            <person name="Strong R."/>
            <person name="Sun J."/>
            <person name="Thomasova D."/>
            <person name="Ton L.Q."/>
            <person name="Topalis P."/>
            <person name="Tu Z.J."/>
            <person name="Unger M.F."/>
            <person name="Walenz B."/>
            <person name="Wang A.H."/>
            <person name="Wang J."/>
            <person name="Wang M."/>
            <person name="Wang X."/>
            <person name="Woodford K.J."/>
            <person name="Wortman J.R."/>
            <person name="Wu M."/>
            <person name="Yao A."/>
            <person name="Zdobnov E.M."/>
            <person name="Zhang H."/>
            <person name="Zhao Q."/>
            <person name="Zhao S."/>
            <person name="Zhu S.C."/>
            <person name="Zhimulev I."/>
            <person name="Coluzzi M."/>
            <person name="della Torre A."/>
            <person name="Roth C.W."/>
            <person name="Louis C."/>
            <person name="Kalush F."/>
            <person name="Mural R.J."/>
            <person name="Myers E.W."/>
            <person name="Adams M.D."/>
            <person name="Smith H.O."/>
            <person name="Broder S."/>
            <person name="Gardner M.J."/>
            <person name="Fraser C.M."/>
            <person name="Birney E."/>
            <person name="Bork P."/>
            <person name="Brey P.T."/>
            <person name="Venter J.C."/>
            <person name="Weissenbach J."/>
            <person name="Kafatos F.C."/>
            <person name="Collins F.H."/>
            <person name="Hoffman S.L."/>
        </authorList>
    </citation>
    <scope>NUCLEOTIDE SEQUENCE [LARGE SCALE GENOMIC DNA]</scope>
    <source>
        <strain evidence="11">PEST</strain>
    </source>
</reference>
<reference key="4">
    <citation type="journal article" date="2011" name="PLoS ONE">
        <title>Heteromeric Anopheline odorant receptors exhibit distinct channel properties.</title>
        <authorList>
            <person name="Pask G.M."/>
            <person name="Jones P.L."/>
            <person name="Rutzler M."/>
            <person name="Rinker D.C."/>
            <person name="Zwiebel L.J."/>
        </authorList>
    </citation>
    <scope>FUNCTION</scope>
    <scope>INTERACTION WITH ODORANT RECEPTORS</scope>
</reference>
<reference key="5">
    <citation type="journal article" date="2011" name="Proc. Natl. Acad. Sci. U.S.A.">
        <title>Functional agonism of insect odorant receptor ion channels.</title>
        <authorList>
            <person name="Jones P.L."/>
            <person name="Pask G.M."/>
            <person name="Rinker D.C."/>
            <person name="Zwiebel L.J."/>
        </authorList>
    </citation>
    <scope>FUNCTION</scope>
    <scope>INTERACTION WITH ODORANT RECEPTORS</scope>
    <scope>AGONIST VUAA1</scope>
</reference>
<reference key="6">
    <citation type="journal article" date="2012" name="PLoS ONE">
        <title>Allosteric antagonism of insect odorant receptor ion channels.</title>
        <authorList>
            <person name="Jones P.L."/>
            <person name="Pask G.M."/>
            <person name="Romaine I.M."/>
            <person name="Taylor R.W."/>
            <person name="Reid P.R."/>
            <person name="Waterson A.G."/>
            <person name="Sulikowski G.A."/>
            <person name="Zwiebel L.J."/>
        </authorList>
    </citation>
    <scope>FUNCTION</scope>
    <scope>AGONIST VUAA1</scope>
</reference>
<reference key="7">
    <citation type="journal article" date="2013" name="Chem. Senses">
        <title>Blockade of insect odorant receptor currents by amiloride derivatives.</title>
        <authorList>
            <person name="Pask G.M."/>
            <person name="Bobkov Y.V."/>
            <person name="Corey E.A."/>
            <person name="Ache B.W."/>
            <person name="Zwiebel L.J."/>
        </authorList>
    </citation>
    <scope>FUNCTION</scope>
    <scope>INTERACTION WITH ODORANT RECEPTORS</scope>
    <scope>BLOCKADE BY AMILORIDE DERIVATIVES</scope>
</reference>
<evidence type="ECO:0000250" key="1"/>
<evidence type="ECO:0000255" key="2"/>
<evidence type="ECO:0000269" key="3">
    <source>
    </source>
</evidence>
<evidence type="ECO:0000269" key="4">
    <source>
    </source>
</evidence>
<evidence type="ECO:0000269" key="5">
    <source>
    </source>
</evidence>
<evidence type="ECO:0000269" key="6">
    <source>
    </source>
</evidence>
<evidence type="ECO:0000269" key="7">
    <source>
    </source>
</evidence>
<evidence type="ECO:0000305" key="8"/>
<evidence type="ECO:0000312" key="9">
    <source>
        <dbReference type="EMBL" id="AAR14938.1"/>
    </source>
</evidence>
<evidence type="ECO:0000312" key="10">
    <source>
        <dbReference type="EMBL" id="AAX14774.1"/>
    </source>
</evidence>
<evidence type="ECO:0000312" key="11">
    <source>
        <dbReference type="EMBL" id="EAA08038.3"/>
    </source>
</evidence>
<feature type="chain" id="PRO_0000296373" description="Odorant receptor coreceptor">
    <location>
        <begin position="1"/>
        <end position="478"/>
    </location>
</feature>
<feature type="topological domain" description="Cytoplasmic" evidence="2">
    <location>
        <begin position="1"/>
        <end position="41"/>
    </location>
</feature>
<feature type="transmembrane region" description="Helical; Name=1" evidence="2">
    <location>
        <begin position="42"/>
        <end position="62"/>
    </location>
</feature>
<feature type="topological domain" description="Extracellular" evidence="2">
    <location>
        <begin position="63"/>
        <end position="73"/>
    </location>
</feature>
<feature type="transmembrane region" description="Helical; Name=2" evidence="2">
    <location>
        <begin position="74"/>
        <end position="94"/>
    </location>
</feature>
<feature type="topological domain" description="Cytoplasmic" evidence="2">
    <location>
        <begin position="95"/>
        <end position="133"/>
    </location>
</feature>
<feature type="transmembrane region" description="Helical; Name=3" evidence="2">
    <location>
        <begin position="134"/>
        <end position="154"/>
    </location>
</feature>
<feature type="topological domain" description="Extracellular" evidence="2">
    <location>
        <begin position="155"/>
        <end position="188"/>
    </location>
</feature>
<feature type="transmembrane region" description="Helical; Name=4" evidence="2">
    <location>
        <begin position="189"/>
        <end position="209"/>
    </location>
</feature>
<feature type="topological domain" description="Cytoplasmic" evidence="2">
    <location>
        <begin position="210"/>
        <end position="338"/>
    </location>
</feature>
<feature type="transmembrane region" description="Helical; Name=5" evidence="2">
    <location>
        <begin position="339"/>
        <end position="361"/>
    </location>
</feature>
<feature type="topological domain" description="Extracellular" evidence="2">
    <location>
        <begin position="362"/>
        <end position="382"/>
    </location>
</feature>
<feature type="transmembrane region" description="Helical; Name=6" evidence="2">
    <location>
        <begin position="383"/>
        <end position="403"/>
    </location>
</feature>
<feature type="topological domain" description="Cytoplasmic" evidence="2">
    <location>
        <begin position="404"/>
        <end position="454"/>
    </location>
</feature>
<feature type="transmembrane region" description="Helical; Name=7" evidence="2">
    <location>
        <begin position="455"/>
        <end position="475"/>
    </location>
</feature>
<feature type="topological domain" description="Extracellular" evidence="2">
    <location>
        <begin position="476"/>
        <end position="478"/>
    </location>
</feature>
<feature type="glycosylation site" description="N-linked (GlcNAc...) asparagine" evidence="2">
    <location>
        <position position="167"/>
    </location>
</feature>
<name>ORCO_ANOGA</name>
<organism>
    <name type="scientific">Anopheles gambiae</name>
    <name type="common">African malaria mosquito</name>
    <dbReference type="NCBI Taxonomy" id="7165"/>
    <lineage>
        <taxon>Eukaryota</taxon>
        <taxon>Metazoa</taxon>
        <taxon>Ecdysozoa</taxon>
        <taxon>Arthropoda</taxon>
        <taxon>Hexapoda</taxon>
        <taxon>Insecta</taxon>
        <taxon>Pterygota</taxon>
        <taxon>Neoptera</taxon>
        <taxon>Endopterygota</taxon>
        <taxon>Diptera</taxon>
        <taxon>Nematocera</taxon>
        <taxon>Culicoidea</taxon>
        <taxon>Culicidae</taxon>
        <taxon>Anophelinae</taxon>
        <taxon>Anopheles</taxon>
    </lineage>
</organism>
<keyword id="KW-0085">Behavior</keyword>
<keyword id="KW-1003">Cell membrane</keyword>
<keyword id="KW-0325">Glycoprotein</keyword>
<keyword id="KW-0472">Membrane</keyword>
<keyword id="KW-0552">Olfaction</keyword>
<keyword id="KW-0675">Receptor</keyword>
<keyword id="KW-1185">Reference proteome</keyword>
<keyword id="KW-0716">Sensory transduction</keyword>
<keyword id="KW-0807">Transducer</keyword>
<keyword id="KW-0812">Transmembrane</keyword>
<keyword id="KW-1133">Transmembrane helix</keyword>
<dbReference type="EMBL" id="AY363725">
    <property type="protein sequence ID" value="AAR14938.1"/>
    <property type="molecule type" value="mRNA"/>
</dbReference>
<dbReference type="EMBL" id="AY363726">
    <property type="protein sequence ID" value="AAR14939.1"/>
    <property type="molecule type" value="Genomic_DNA"/>
</dbReference>
<dbReference type="EMBL" id="AY843205">
    <property type="protein sequence ID" value="AAX14774.1"/>
    <property type="molecule type" value="mRNA"/>
</dbReference>
<dbReference type="EMBL" id="AAAB01008859">
    <property type="protein sequence ID" value="EAA08038.3"/>
    <property type="molecule type" value="Genomic_DNA"/>
</dbReference>
<dbReference type="SMR" id="Q7QCC7"/>
<dbReference type="FunCoup" id="Q7QCC7">
    <property type="interactions" value="42"/>
</dbReference>
<dbReference type="STRING" id="7165.Q7QCC7"/>
<dbReference type="GlyCosmos" id="Q7QCC7">
    <property type="glycosylation" value="1 site, No reported glycans"/>
</dbReference>
<dbReference type="PaxDb" id="7165-AGAP002560-PA"/>
<dbReference type="EnsemblMetazoa" id="AGAP002560-RA">
    <property type="protein sequence ID" value="AGAP002560-PA"/>
    <property type="gene ID" value="AGAP002560"/>
</dbReference>
<dbReference type="GeneID" id="1273405"/>
<dbReference type="KEGG" id="aga:1273405"/>
<dbReference type="CTD" id="40650"/>
<dbReference type="VEuPathDB" id="VectorBase:AGAMI1_013813"/>
<dbReference type="VEuPathDB" id="VectorBase:AGAP002560"/>
<dbReference type="eggNOG" id="ENOG502QR02">
    <property type="taxonomic scope" value="Eukaryota"/>
</dbReference>
<dbReference type="HOGENOM" id="CLU_045605_0_0_1"/>
<dbReference type="InParanoid" id="Q7QCC7"/>
<dbReference type="OMA" id="VERHKHI"/>
<dbReference type="PhylomeDB" id="Q7QCC7"/>
<dbReference type="Proteomes" id="UP000007062">
    <property type="component" value="Chromosome 2R"/>
</dbReference>
<dbReference type="GO" id="GO:0016020">
    <property type="term" value="C:membrane"/>
    <property type="evidence" value="ECO:0000305"/>
    <property type="project" value="UniProtKB"/>
</dbReference>
<dbReference type="GO" id="GO:0005886">
    <property type="term" value="C:plasma membrane"/>
    <property type="evidence" value="ECO:0000318"/>
    <property type="project" value="GO_Central"/>
</dbReference>
<dbReference type="GO" id="GO:0015026">
    <property type="term" value="F:coreceptor activity"/>
    <property type="evidence" value="ECO:0000316"/>
    <property type="project" value="FlyBase"/>
</dbReference>
<dbReference type="GO" id="GO:0005549">
    <property type="term" value="F:odorant binding"/>
    <property type="evidence" value="ECO:0007669"/>
    <property type="project" value="InterPro"/>
</dbReference>
<dbReference type="GO" id="GO:0004984">
    <property type="term" value="F:olfactory receptor activity"/>
    <property type="evidence" value="ECO:0000315"/>
    <property type="project" value="UniProtKB"/>
</dbReference>
<dbReference type="GO" id="GO:0008527">
    <property type="term" value="F:taste receptor activity"/>
    <property type="evidence" value="ECO:0000315"/>
    <property type="project" value="UniProtKB"/>
</dbReference>
<dbReference type="GO" id="GO:0050911">
    <property type="term" value="P:detection of chemical stimulus involved in sensory perception of smell"/>
    <property type="evidence" value="ECO:0000316"/>
    <property type="project" value="FlyBase"/>
</dbReference>
<dbReference type="GO" id="GO:0007608">
    <property type="term" value="P:sensory perception of smell"/>
    <property type="evidence" value="ECO:0000315"/>
    <property type="project" value="UniProtKB"/>
</dbReference>
<dbReference type="GO" id="GO:0050909">
    <property type="term" value="P:sensory perception of taste"/>
    <property type="evidence" value="ECO:0000315"/>
    <property type="project" value="UniProtKB"/>
</dbReference>
<dbReference type="GO" id="GO:0007165">
    <property type="term" value="P:signal transduction"/>
    <property type="evidence" value="ECO:0007669"/>
    <property type="project" value="UniProtKB-KW"/>
</dbReference>
<dbReference type="InterPro" id="IPR004117">
    <property type="entry name" value="7tm6_olfct_rcpt"/>
</dbReference>
<dbReference type="PANTHER" id="PTHR21137">
    <property type="entry name" value="ODORANT RECEPTOR"/>
    <property type="match status" value="1"/>
</dbReference>
<dbReference type="PANTHER" id="PTHR21137:SF9">
    <property type="entry name" value="ODORANT RECEPTOR CORECEPTOR"/>
    <property type="match status" value="1"/>
</dbReference>
<dbReference type="Pfam" id="PF02949">
    <property type="entry name" value="7tm_6"/>
    <property type="match status" value="1"/>
</dbReference>